<keyword id="KW-0256">Endoplasmic reticulum</keyword>
<keyword id="KW-0472">Membrane</keyword>
<keyword id="KW-1185">Reference proteome</keyword>
<keyword id="KW-0812">Transmembrane</keyword>
<keyword id="KW-1133">Transmembrane helix</keyword>
<proteinExistence type="inferred from homology"/>
<accession>Q5EB66</accession>
<reference key="1">
    <citation type="journal article" date="2004" name="Genome Res.">
        <title>The status, quality, and expansion of the NIH full-length cDNA project: the Mammalian Gene Collection (MGC).</title>
        <authorList>
            <consortium name="The MGC Project Team"/>
        </authorList>
    </citation>
    <scope>NUCLEOTIDE SEQUENCE [LARGE SCALE MRNA]</scope>
    <source>
        <tissue>Brain</tissue>
    </source>
</reference>
<protein>
    <recommendedName>
        <fullName>Triple QxxK/R motif-containing protein</fullName>
    </recommendedName>
    <alternativeName>
        <fullName>Triple repetitive-sequence of QXXK/R protein homolog</fullName>
    </alternativeName>
</protein>
<sequence length="86" mass="9677">MGRKDSSTTKLPVDQYRKQIGKQDYKKTKPILRATKLKAEAKKTAIGIKEVGLMLAAILALLLAFYAFFYLRLSTNIDADLDPDED</sequence>
<gene>
    <name type="primary">Triqk</name>
</gene>
<organism>
    <name type="scientific">Rattus norvegicus</name>
    <name type="common">Rat</name>
    <dbReference type="NCBI Taxonomy" id="10116"/>
    <lineage>
        <taxon>Eukaryota</taxon>
        <taxon>Metazoa</taxon>
        <taxon>Chordata</taxon>
        <taxon>Craniata</taxon>
        <taxon>Vertebrata</taxon>
        <taxon>Euteleostomi</taxon>
        <taxon>Mammalia</taxon>
        <taxon>Eutheria</taxon>
        <taxon>Euarchontoglires</taxon>
        <taxon>Glires</taxon>
        <taxon>Rodentia</taxon>
        <taxon>Myomorpha</taxon>
        <taxon>Muroidea</taxon>
        <taxon>Muridae</taxon>
        <taxon>Murinae</taxon>
        <taxon>Rattus</taxon>
    </lineage>
</organism>
<comment type="function">
    <text evidence="1">May play a role in cell growth and maintenance of cell morphology.</text>
</comment>
<comment type="subcellular location">
    <subcellularLocation>
        <location evidence="1">Endoplasmic reticulum membrane</location>
        <topology evidence="1">Single-pass membrane protein</topology>
    </subcellularLocation>
</comment>
<comment type="similarity">
    <text evidence="3">Belongs to the TRIQK family.</text>
</comment>
<name>TRIQK_RAT</name>
<evidence type="ECO:0000250" key="1"/>
<evidence type="ECO:0000255" key="2"/>
<evidence type="ECO:0000305" key="3"/>
<feature type="chain" id="PRO_0000340676" description="Triple QxxK/R motif-containing protein">
    <location>
        <begin position="1"/>
        <end position="86"/>
    </location>
</feature>
<feature type="transmembrane region" description="Helical" evidence="2">
    <location>
        <begin position="51"/>
        <end position="71"/>
    </location>
</feature>
<dbReference type="EMBL" id="BC089993">
    <property type="protein sequence ID" value="AAH89993.1"/>
    <property type="molecule type" value="mRNA"/>
</dbReference>
<dbReference type="RefSeq" id="NP_001165273.1">
    <property type="nucleotide sequence ID" value="NM_001171802.1"/>
</dbReference>
<dbReference type="RefSeq" id="XP_006237968.1">
    <property type="nucleotide sequence ID" value="XM_006237906.5"/>
</dbReference>
<dbReference type="SMR" id="Q5EB66"/>
<dbReference type="FunCoup" id="Q5EB66">
    <property type="interactions" value="391"/>
</dbReference>
<dbReference type="STRING" id="10116.ENSRNOP00000058042"/>
<dbReference type="PhosphoSitePlus" id="Q5EB66"/>
<dbReference type="PaxDb" id="10116-ENSRNOP00000058042"/>
<dbReference type="Ensembl" id="ENSRNOT00000061328.4">
    <property type="protein sequence ID" value="ENSRNOP00000058042.2"/>
    <property type="gene ID" value="ENSRNOG00000039924.4"/>
</dbReference>
<dbReference type="GeneID" id="500413"/>
<dbReference type="KEGG" id="rno:500413"/>
<dbReference type="UCSC" id="RGD:1561260">
    <property type="organism name" value="rat"/>
</dbReference>
<dbReference type="AGR" id="RGD:1561260"/>
<dbReference type="CTD" id="286144"/>
<dbReference type="RGD" id="1561260">
    <property type="gene designation" value="Triqk"/>
</dbReference>
<dbReference type="eggNOG" id="ENOG502S3QR">
    <property type="taxonomic scope" value="Eukaryota"/>
</dbReference>
<dbReference type="GeneTree" id="ENSGT00390000017350"/>
<dbReference type="HOGENOM" id="CLU_191636_0_0_1"/>
<dbReference type="InParanoid" id="Q5EB66"/>
<dbReference type="OMA" id="NIGKQDY"/>
<dbReference type="OrthoDB" id="10049402at2759"/>
<dbReference type="PhylomeDB" id="Q5EB66"/>
<dbReference type="TreeFam" id="TF328583"/>
<dbReference type="PRO" id="PR:Q5EB66"/>
<dbReference type="Proteomes" id="UP000002494">
    <property type="component" value="Chromosome 5"/>
</dbReference>
<dbReference type="Bgee" id="ENSRNOG00000039924">
    <property type="expression patterns" value="Expressed in stomach and 18 other cell types or tissues"/>
</dbReference>
<dbReference type="GO" id="GO:0005789">
    <property type="term" value="C:endoplasmic reticulum membrane"/>
    <property type="evidence" value="ECO:0007669"/>
    <property type="project" value="UniProtKB-SubCell"/>
</dbReference>
<dbReference type="InterPro" id="IPR024842">
    <property type="entry name" value="TRIQK"/>
</dbReference>
<dbReference type="PANTHER" id="PTHR20583">
    <property type="entry name" value="TRIPLE QXXK/R MOTIF-CONTAINING PROTEIN"/>
    <property type="match status" value="1"/>
</dbReference>
<dbReference type="PANTHER" id="PTHR20583:SF1">
    <property type="entry name" value="TRIPLE QXXK_R MOTIF-CONTAINING PROTEIN"/>
    <property type="match status" value="1"/>
</dbReference>
<dbReference type="Pfam" id="PF15168">
    <property type="entry name" value="TRIQK"/>
    <property type="match status" value="1"/>
</dbReference>